<accession>C6EUD4</accession>
<name>APSCT_FASHE</name>
<proteinExistence type="evidence at protein level"/>
<reference key="1">
    <citation type="journal article" date="2009" name="Mol. Biochem. Parasitol.">
        <title>Acetate:succinate CoA-transferase in the anaerobic mitochondria of Fasciola hepatica.</title>
        <authorList>
            <person name="van Grinsven K.W."/>
            <person name="van Hellemond J.J."/>
            <person name="Tielens A.G."/>
        </authorList>
    </citation>
    <scope>NUCLEOTIDE SEQUENCE [MRNA]</scope>
    <scope>FUNCTION</scope>
    <scope>CATALYTIC ACTIVITY</scope>
    <scope>SUBCELLULAR LOCATION</scope>
</reference>
<protein>
    <recommendedName>
        <fullName evidence="5">Succinyl-CoA:acetate/propanoyl-CoA:succinate CoA transferase</fullName>
        <ecNumber evidence="3">2.8.3.18</ecNumber>
        <ecNumber evidence="3">2.8.3.27</ecNumber>
    </recommendedName>
    <alternativeName>
        <fullName evidence="4">Acetate:succinate CoA-transferase</fullName>
        <shortName evidence="4">ASCT</shortName>
    </alternativeName>
    <alternativeName>
        <fullName evidence="4">Propionate:succinate CoA-transferase</fullName>
        <shortName evidence="4">PSCT</shortName>
    </alternativeName>
    <alternativeName>
        <fullName evidence="4">Short-chain acyl-CoA-transferase</fullName>
    </alternativeName>
</protein>
<organism>
    <name type="scientific">Fasciola hepatica</name>
    <name type="common">Liver fluke</name>
    <dbReference type="NCBI Taxonomy" id="6192"/>
    <lineage>
        <taxon>Eukaryota</taxon>
        <taxon>Metazoa</taxon>
        <taxon>Spiralia</taxon>
        <taxon>Lophotrochozoa</taxon>
        <taxon>Platyhelminthes</taxon>
        <taxon>Trematoda</taxon>
        <taxon>Digenea</taxon>
        <taxon>Plagiorchiida</taxon>
        <taxon>Echinostomata</taxon>
        <taxon>Echinostomatoidea</taxon>
        <taxon>Fasciolidae</taxon>
        <taxon>Fasciola</taxon>
    </lineage>
</organism>
<keyword id="KW-0496">Mitochondrion</keyword>
<keyword id="KW-0808">Transferase</keyword>
<keyword id="KW-0809">Transit peptide</keyword>
<comment type="function">
    <text evidence="3">Transferase involved in anaerobic fumarate-respiration in the mitochondria (PubMed:19103231). Catalyzes the transfer of the CoA moiety of acetyl-CoA or propionyl-CoA to succinate, thereby forming acetate and propionate, respectively (PubMed:19103231). Acetate and propionate are the two major metabolic end products in the anaerobic mitochondrial metabolism of F.hepatica (PubMed:19103231). Also displays CoA transferase activities from acetyl-CoA to propionate, acetate and butyrate (PubMed:19103231).</text>
</comment>
<comment type="catalytic activity">
    <reaction evidence="3">
        <text>succinyl-CoA + acetate = succinate + acetyl-CoA</text>
        <dbReference type="Rhea" id="RHEA:35711"/>
        <dbReference type="ChEBI" id="CHEBI:30031"/>
        <dbReference type="ChEBI" id="CHEBI:30089"/>
        <dbReference type="ChEBI" id="CHEBI:57288"/>
        <dbReference type="ChEBI" id="CHEBI:57292"/>
        <dbReference type="EC" id="2.8.3.18"/>
    </reaction>
    <physiologicalReaction direction="right-to-left" evidence="3">
        <dbReference type="Rhea" id="RHEA:35713"/>
    </physiologicalReaction>
</comment>
<comment type="catalytic activity">
    <reaction evidence="3">
        <text>propanoyl-CoA + succinate = propanoate + succinyl-CoA</text>
        <dbReference type="Rhea" id="RHEA:28010"/>
        <dbReference type="ChEBI" id="CHEBI:17272"/>
        <dbReference type="ChEBI" id="CHEBI:30031"/>
        <dbReference type="ChEBI" id="CHEBI:57292"/>
        <dbReference type="ChEBI" id="CHEBI:57392"/>
        <dbReference type="EC" id="2.8.3.27"/>
    </reaction>
    <physiologicalReaction direction="left-to-right" evidence="3">
        <dbReference type="Rhea" id="RHEA:28011"/>
    </physiologicalReaction>
</comment>
<comment type="subcellular location">
    <subcellularLocation>
        <location evidence="3">Mitochondrion</location>
    </subcellularLocation>
</comment>
<comment type="similarity">
    <text evidence="5">Belongs to the acetyl-CoA hydrolase/transferase family.</text>
</comment>
<sequence length="478" mass="52433">MYQLAFLRCRYASPIVREARRAFHASRKCQYYIDGPQEPFSPMPGRFPKWASNGDETFGFLKDGANVFIHGGAATPSLLIKELYEYVMSKNLKDIKLFHIHTEGPYPFNDAEGHFRSTSLFTGGNCRKAIQEGRADYTPIFLSEIPLLFRRKHVQLDLALINVTPPDKHGFCSLGPSVDVTRAAIQNATHIVAQVNDQLPLTRGDASIHFSNLTVMRAGSQPCHEMSPRPASEVEDKIGQIIAENLVEDGATLQTGIGAIPDAVLSKLTNHKNLGVHTEMFSDGVVQLVQLGAITNAYKKLRPGKVVSSFVVGTRKVFDFLDNNPMVDMCDVAWVNSPVVIAQNPKPVAINSCIEIDITGQVSSDSIGTTIYSGFGGQVDFLRGAAVSLDGQGKPIIAVPSVTKRNETKIVPHLKLGGGVVTTRAHVHYVVTEYGIAYLFGKNLRQRAHALIQIAHPDHRESLEKAAFDRLKVMPSPL</sequence>
<feature type="transit peptide" description="Mitochondrion" evidence="2">
    <location>
        <begin position="1"/>
        <end position="30"/>
    </location>
</feature>
<feature type="chain" id="PRO_0000461340" description="Succinyl-CoA:acetate/propanoyl-CoA:succinate CoA transferase">
    <location>
        <begin position="31"/>
        <end position="478"/>
    </location>
</feature>
<feature type="active site" description="5-glutamyl coenzyme A thioester intermediate" evidence="1">
    <location>
        <position position="279"/>
    </location>
</feature>
<feature type="binding site" evidence="1">
    <location>
        <begin position="256"/>
        <end position="260"/>
    </location>
    <ligand>
        <name>CoA</name>
        <dbReference type="ChEBI" id="CHEBI:57287"/>
    </ligand>
</feature>
<feature type="binding site" evidence="1">
    <location>
        <position position="354"/>
    </location>
    <ligand>
        <name>CoA</name>
        <dbReference type="ChEBI" id="CHEBI:57287"/>
    </ligand>
</feature>
<feature type="binding site" evidence="1">
    <location>
        <position position="377"/>
    </location>
    <ligand>
        <name>CoA</name>
        <dbReference type="ChEBI" id="CHEBI:57287"/>
    </ligand>
</feature>
<feature type="binding site" evidence="1">
    <location>
        <position position="404"/>
    </location>
    <ligand>
        <name>CoA</name>
        <dbReference type="ChEBI" id="CHEBI:57287"/>
    </ligand>
</feature>
<dbReference type="EC" id="2.8.3.18" evidence="3"/>
<dbReference type="EC" id="2.8.3.27" evidence="3"/>
<dbReference type="EMBL" id="EU786800">
    <property type="protein sequence ID" value="ACF06126.1"/>
    <property type="molecule type" value="mRNA"/>
</dbReference>
<dbReference type="SMR" id="C6EUD4"/>
<dbReference type="KEGG" id="ag:ACF06126"/>
<dbReference type="BioCyc" id="MetaCyc:MONOMER-18306"/>
<dbReference type="GO" id="GO:0005739">
    <property type="term" value="C:mitochondrion"/>
    <property type="evidence" value="ECO:0007669"/>
    <property type="project" value="UniProtKB-SubCell"/>
</dbReference>
<dbReference type="GO" id="GO:0008775">
    <property type="term" value="F:acetate CoA-transferase activity"/>
    <property type="evidence" value="ECO:0007669"/>
    <property type="project" value="InterPro"/>
</dbReference>
<dbReference type="GO" id="GO:0003986">
    <property type="term" value="F:acetyl-CoA hydrolase activity"/>
    <property type="evidence" value="ECO:0007669"/>
    <property type="project" value="UniProtKB-EC"/>
</dbReference>
<dbReference type="GO" id="GO:0043821">
    <property type="term" value="F:propionyl-CoA:succinate CoA-transferase activity"/>
    <property type="evidence" value="ECO:0007669"/>
    <property type="project" value="RHEA"/>
</dbReference>
<dbReference type="GO" id="GO:0006083">
    <property type="term" value="P:acetate metabolic process"/>
    <property type="evidence" value="ECO:0007669"/>
    <property type="project" value="InterPro"/>
</dbReference>
<dbReference type="Gene3D" id="3.30.750.70">
    <property type="entry name" value="4-hydroxybutyrate coenzyme like domains"/>
    <property type="match status" value="1"/>
</dbReference>
<dbReference type="Gene3D" id="3.40.1080.20">
    <property type="entry name" value="Acetyl-CoA hydrolase/transferase C-terminal domain"/>
    <property type="match status" value="1"/>
</dbReference>
<dbReference type="Gene3D" id="3.40.1080.10">
    <property type="entry name" value="Glutaconate Coenzyme A-transferase"/>
    <property type="match status" value="1"/>
</dbReference>
<dbReference type="InterPro" id="IPR026888">
    <property type="entry name" value="AcetylCoA_hyd_C"/>
</dbReference>
<dbReference type="InterPro" id="IPR038460">
    <property type="entry name" value="AcetylCoA_hyd_C_sf"/>
</dbReference>
<dbReference type="InterPro" id="IPR046433">
    <property type="entry name" value="ActCoA_hydro"/>
</dbReference>
<dbReference type="InterPro" id="IPR003702">
    <property type="entry name" value="ActCoA_hydro_N"/>
</dbReference>
<dbReference type="InterPro" id="IPR037171">
    <property type="entry name" value="NagB/RpiA_transferase-like"/>
</dbReference>
<dbReference type="PANTHER" id="PTHR21432:SF20">
    <property type="entry name" value="ACETYL-COA HYDROLASE"/>
    <property type="match status" value="1"/>
</dbReference>
<dbReference type="PANTHER" id="PTHR21432">
    <property type="entry name" value="ACETYL-COA HYDROLASE-RELATED"/>
    <property type="match status" value="1"/>
</dbReference>
<dbReference type="Pfam" id="PF13336">
    <property type="entry name" value="AcetylCoA_hyd_C"/>
    <property type="match status" value="1"/>
</dbReference>
<dbReference type="Pfam" id="PF02550">
    <property type="entry name" value="AcetylCoA_hydro"/>
    <property type="match status" value="1"/>
</dbReference>
<dbReference type="SUPFAM" id="SSF100950">
    <property type="entry name" value="NagB/RpiA/CoA transferase-like"/>
    <property type="match status" value="2"/>
</dbReference>
<evidence type="ECO:0000250" key="1">
    <source>
        <dbReference type="UniProtKB" id="B3EY95"/>
    </source>
</evidence>
<evidence type="ECO:0000255" key="2"/>
<evidence type="ECO:0000269" key="3">
    <source>
    </source>
</evidence>
<evidence type="ECO:0000303" key="4">
    <source>
    </source>
</evidence>
<evidence type="ECO:0000305" key="5"/>